<proteinExistence type="inferred from homology"/>
<gene>
    <name type="ORF">BRRF2</name>
</gene>
<dbReference type="EMBL" id="DQ279927">
    <property type="protein sequence ID" value="ABB89250.1"/>
    <property type="molecule type" value="Genomic_DNA"/>
</dbReference>
<dbReference type="RefSeq" id="YP_001129470.1">
    <property type="nucleotide sequence ID" value="NC_009334.1"/>
</dbReference>
<dbReference type="KEGG" id="vg:5176160"/>
<dbReference type="Proteomes" id="UP000007639">
    <property type="component" value="Genome"/>
</dbReference>
<dbReference type="GO" id="GO:0019033">
    <property type="term" value="C:viral tegument"/>
    <property type="evidence" value="ECO:0007669"/>
    <property type="project" value="UniProtKB-SubCell"/>
</dbReference>
<dbReference type="InterPro" id="IPR008550">
    <property type="entry name" value="Herpesvirus_BRRF2-like"/>
</dbReference>
<dbReference type="Pfam" id="PF05734">
    <property type="entry name" value="DUF832"/>
    <property type="match status" value="1"/>
</dbReference>
<organismHost>
    <name type="scientific">Homo sapiens</name>
    <name type="common">Human</name>
    <dbReference type="NCBI Taxonomy" id="9606"/>
</organismHost>
<accession>Q1HVF8</accession>
<protein>
    <recommendedName>
        <fullName>Tegument protein BRRF2</fullName>
    </recommendedName>
</protein>
<comment type="subcellular location">
    <subcellularLocation>
        <location evidence="2">Virion tegument</location>
    </subcellularLocation>
</comment>
<comment type="similarity">
    <text evidence="2">Belongs to the lymphocryptovirus BRRF2 family.</text>
</comment>
<name>BRRF2_EBVA8</name>
<evidence type="ECO:0000256" key="1">
    <source>
        <dbReference type="SAM" id="MobiDB-lite"/>
    </source>
</evidence>
<evidence type="ECO:0000305" key="2"/>
<reference key="1">
    <citation type="journal article" date="2006" name="Virology">
        <title>The genome of Epstein-Barr virus type 2 strain AG876.</title>
        <authorList>
            <person name="Dolan A."/>
            <person name="Addison C."/>
            <person name="Gatherer D."/>
            <person name="Davison A.J."/>
            <person name="McGeoch D.J."/>
        </authorList>
    </citation>
    <scope>NUCLEOTIDE SEQUENCE [LARGE SCALE GENOMIC DNA]</scope>
</reference>
<sequence>MSGQQRGSVILVPEHLAGALTKLMSDFITGQDVTLSGGNIAVKIRDAINQTPGGGDVAILSSLFALWNALPTSGRQSSRDDLIPAAVQALTTAHNLCLGVIPGETSHKDTPESLLRAIVTGLQKLWVDSCGCPECLQCLKGLKAIKPGLYEIPRIIPHTKQCSPVNLLNMLVHKLVALRGHVQLAYDARVLTPDFHEIPDLDDSDAVFARTLLAALFHLNMFFILKDYITQDSMSLKQALSGHWMSATGNPLPAAPETLRDYLEAFRNSDNHFYLPTTGPLNTFKFPEELLGRVVVIDSSLCAASHVQDVITRGVGAGVPRPQFLALPPAPSRKPQQTCSQLTSRGNESSRRNLGQPGGTSPAVPPVCPIVSLTASGAKQNRGGMGSLHLAKPEETSPAVSPVCPIASPAASRSKQHCGVTGSSQAAPSSSSVAPVASLSGDLEEEEEGSRESPSLPSSKKGADEFEAWLEAQDANFEDVQREFSGLRVIGDEDEDGSEDGEFSDLDLSDSDHEGDEGGGAVGGGRSLHSLYSLSVI</sequence>
<keyword id="KW-1185">Reference proteome</keyword>
<keyword id="KW-0946">Virion</keyword>
<keyword id="KW-0920">Virion tegument</keyword>
<organism>
    <name type="scientific">Epstein-Barr virus (strain AG876)</name>
    <name type="common">HHV-4</name>
    <name type="synonym">Human herpesvirus 4</name>
    <dbReference type="NCBI Taxonomy" id="82830"/>
    <lineage>
        <taxon>Viruses</taxon>
        <taxon>Duplodnaviria</taxon>
        <taxon>Heunggongvirae</taxon>
        <taxon>Peploviricota</taxon>
        <taxon>Herviviricetes</taxon>
        <taxon>Herpesvirales</taxon>
        <taxon>Orthoherpesviridae</taxon>
        <taxon>Gammaherpesvirinae</taxon>
        <taxon>Lymphocryptovirus</taxon>
        <taxon>Lymphocryptovirus humangamma4</taxon>
        <taxon>Epstein-Barr virus (strain GD1)</taxon>
    </lineage>
</organism>
<feature type="chain" id="PRO_0000382441" description="Tegument protein BRRF2">
    <location>
        <begin position="1"/>
        <end position="537"/>
    </location>
</feature>
<feature type="region of interest" description="Disordered" evidence="1">
    <location>
        <begin position="325"/>
        <end position="474"/>
    </location>
</feature>
<feature type="region of interest" description="Disordered" evidence="1">
    <location>
        <begin position="486"/>
        <end position="537"/>
    </location>
</feature>
<feature type="compositionally biased region" description="Polar residues" evidence="1">
    <location>
        <begin position="334"/>
        <end position="347"/>
    </location>
</feature>
<feature type="compositionally biased region" description="Low complexity" evidence="1">
    <location>
        <begin position="423"/>
        <end position="441"/>
    </location>
</feature>
<feature type="compositionally biased region" description="Acidic residues" evidence="1">
    <location>
        <begin position="492"/>
        <end position="517"/>
    </location>
</feature>